<proteinExistence type="evidence at transcript level"/>
<sequence length="417" mass="46547">MEVNPPKQEHLLALKVMRLTKPTLFTNIPVTCEEKDLPGDLFNQLMRDDPSTVNGAEILMLGEMLTLPQNFGNIFLGETFSSYISVHNDSNQVVKDILVKADLQTSSQRLNLSASNAAVAELKPDCCIDDVIHHEVKEIGTHILVCAVSYTTQSGEKMYFRKFFKFQVLKPLDVKTKFYNAESDLSSVTDEVFLEAQIQNITTSPMFMEKVSLEPSIMYNVAELNSVNQAGECVTTFGSRAYLQPMDTRQYLYCLKPKKEFAEKAGIIKGVTVIGKLDIVWKTNLGERGRLQTSQLQRMAPGYGDVRLSLEAIPDTVNLEEPFHITCKITNCSERTMDLVLEMCNTNSIHWCGISGRQLGKLHPSSSLCLALTLLSSVQGLQSVSGLRLTDTFLKRTYEYDDIAQVCVVSSAIKVES</sequence>
<comment type="subunit">
    <text evidence="1">Part of the multisubunit TRAPP (transport protein particle) complex.</text>
</comment>
<comment type="similarity">
    <text evidence="2">Belongs to the TRAPPC13 family.</text>
</comment>
<feature type="chain" id="PRO_0000321546" description="Trafficking protein particle complex subunit 13">
    <location>
        <begin position="1"/>
        <end position="417"/>
    </location>
</feature>
<organism>
    <name type="scientific">Bos taurus</name>
    <name type="common">Bovine</name>
    <dbReference type="NCBI Taxonomy" id="9913"/>
    <lineage>
        <taxon>Eukaryota</taxon>
        <taxon>Metazoa</taxon>
        <taxon>Chordata</taxon>
        <taxon>Craniata</taxon>
        <taxon>Vertebrata</taxon>
        <taxon>Euteleostomi</taxon>
        <taxon>Mammalia</taxon>
        <taxon>Eutheria</taxon>
        <taxon>Laurasiatheria</taxon>
        <taxon>Artiodactyla</taxon>
        <taxon>Ruminantia</taxon>
        <taxon>Pecora</taxon>
        <taxon>Bovidae</taxon>
        <taxon>Bovinae</taxon>
        <taxon>Bos</taxon>
    </lineage>
</organism>
<keyword id="KW-1185">Reference proteome</keyword>
<name>TPC13_BOVIN</name>
<dbReference type="EMBL" id="BC151376">
    <property type="protein sequence ID" value="AAI51377.1"/>
    <property type="molecule type" value="mRNA"/>
</dbReference>
<dbReference type="RefSeq" id="NP_001095410.1">
    <property type="nucleotide sequence ID" value="NM_001101940.1"/>
</dbReference>
<dbReference type="FunCoup" id="A7MB76">
    <property type="interactions" value="3622"/>
</dbReference>
<dbReference type="STRING" id="9913.ENSBTAP00000022480"/>
<dbReference type="PaxDb" id="9913-ENSBTAP00000022480"/>
<dbReference type="GeneID" id="511108"/>
<dbReference type="KEGG" id="bta:511108"/>
<dbReference type="CTD" id="80006"/>
<dbReference type="VEuPathDB" id="HostDB:ENSBTAG00000016900"/>
<dbReference type="eggNOG" id="KOG2625">
    <property type="taxonomic scope" value="Eukaryota"/>
</dbReference>
<dbReference type="HOGENOM" id="CLU_027041_0_0_1"/>
<dbReference type="InParanoid" id="A7MB76"/>
<dbReference type="OMA" id="YLCVHNG"/>
<dbReference type="OrthoDB" id="10250284at2759"/>
<dbReference type="TreeFam" id="TF314898"/>
<dbReference type="Reactome" id="R-BTA-8876198">
    <property type="pathway name" value="RAB GEFs exchange GTP for GDP on RABs"/>
</dbReference>
<dbReference type="Proteomes" id="UP000009136">
    <property type="component" value="Chromosome 20"/>
</dbReference>
<dbReference type="Bgee" id="ENSBTAG00000016900">
    <property type="expression patterns" value="Expressed in adult mammalian kidney and 104 other cell types or tissues"/>
</dbReference>
<dbReference type="GO" id="GO:1990072">
    <property type="term" value="C:TRAPPIII protein complex"/>
    <property type="evidence" value="ECO:0000318"/>
    <property type="project" value="GO_Central"/>
</dbReference>
<dbReference type="InterPro" id="IPR010378">
    <property type="entry name" value="TRAPPC13"/>
</dbReference>
<dbReference type="InterPro" id="IPR055428">
    <property type="entry name" value="TRAPPC13_C"/>
</dbReference>
<dbReference type="InterPro" id="IPR055429">
    <property type="entry name" value="TRAPPC13_M"/>
</dbReference>
<dbReference type="InterPro" id="IPR055427">
    <property type="entry name" value="TRAPPC13_N"/>
</dbReference>
<dbReference type="PANTHER" id="PTHR13134">
    <property type="entry name" value="TRAFFICKING PROTEIN PARTICLE COMPLEX SUBUNIT 13"/>
    <property type="match status" value="1"/>
</dbReference>
<dbReference type="PANTHER" id="PTHR13134:SF3">
    <property type="entry name" value="TRAFFICKING PROTEIN PARTICLE COMPLEX SUBUNIT 13"/>
    <property type="match status" value="1"/>
</dbReference>
<dbReference type="Pfam" id="PF23643">
    <property type="entry name" value="TRAPPC13_C"/>
    <property type="match status" value="1"/>
</dbReference>
<dbReference type="Pfam" id="PF23647">
    <property type="entry name" value="TRAPPC13_M"/>
    <property type="match status" value="1"/>
</dbReference>
<dbReference type="Pfam" id="PF06159">
    <property type="entry name" value="TRAPPC13_N"/>
    <property type="match status" value="1"/>
</dbReference>
<accession>A7MB76</accession>
<evidence type="ECO:0000250" key="1"/>
<evidence type="ECO:0000305" key="2"/>
<protein>
    <recommendedName>
        <fullName>Trafficking protein particle complex subunit 13</fullName>
    </recommendedName>
</protein>
<gene>
    <name type="primary">TRAPPC13</name>
</gene>
<reference key="1">
    <citation type="submission" date="2007-07" db="EMBL/GenBank/DDBJ databases">
        <authorList>
            <consortium name="NIH - Mammalian Gene Collection (MGC) project"/>
        </authorList>
    </citation>
    <scope>NUCLEOTIDE SEQUENCE [LARGE SCALE MRNA]</scope>
    <source>
        <strain>Hereford</strain>
        <tissue>Fetal muscle</tissue>
    </source>
</reference>